<reference key="1">
    <citation type="submission" date="2006-12" db="EMBL/GenBank/DDBJ databases">
        <authorList>
            <person name="Fouts D.E."/>
            <person name="Nelson K.E."/>
            <person name="Sebastian Y."/>
        </authorList>
    </citation>
    <scope>NUCLEOTIDE SEQUENCE [LARGE SCALE GENOMIC DNA]</scope>
    <source>
        <strain>81-176</strain>
    </source>
</reference>
<evidence type="ECO:0000255" key="1">
    <source>
        <dbReference type="HAMAP-Rule" id="MF_00123"/>
    </source>
</evidence>
<keyword id="KW-0030">Aminoacyl-tRNA synthetase</keyword>
<keyword id="KW-0067">ATP-binding</keyword>
<keyword id="KW-0963">Cytoplasm</keyword>
<keyword id="KW-0436">Ligase</keyword>
<keyword id="KW-0547">Nucleotide-binding</keyword>
<keyword id="KW-0648">Protein biosynthesis</keyword>
<feature type="chain" id="PRO_1000018011" description="Arginine--tRNA ligase">
    <location>
        <begin position="1"/>
        <end position="530"/>
    </location>
</feature>
<feature type="short sequence motif" description="'HIGH' region">
    <location>
        <begin position="113"/>
        <end position="123"/>
    </location>
</feature>
<proteinExistence type="inferred from homology"/>
<sequence length="530" mass="60244">MKSIIFNEIKKILECDFALENPKDKNLAHFATPLAFSLAKELKKSPMLIASDLASKFQNHDCFELVEAVNGYLNFRISKTFLNELANQALTNPNDFTKGEKKQESFLLEYVSANPTGPLHIGHARGAVFGDTLTRLARHLGYKFDTEYYVNDAGNQIYLLGLSILLSVKENILHENVEYPEQYYKGEYIADLAKEAFEKFGKEFFSEENIPSLADWAKDKMLVLIKQNLEQVKIKIDSYVSERSYYDALNATLESLKEHKGIYEQEGKIWLASSQKGDEKDRVIIREDGRGTYLAADIVYHKDKMSRGYGKCINIWGADHHGYIPRMKAAMEFLGFDSNNLEIILAQMVSLLKDGEPYKMSKRAGNFILMSDVVDEIGSDALRYIFLSKKCDTHLEFDISDLQKEDSSNPVYYINYAHARIHQVFAKAGKKIDDVMKADLQSLNQDGVNLLFEALNLKAVLNDAFEARALQKIPDYLKNLAANFHKFYNENKVVGSANENDLLKLFSLVALSIKTAFSLMGIEAKNKMEH</sequence>
<organism>
    <name type="scientific">Campylobacter jejuni subsp. jejuni serotype O:23/36 (strain 81-176)</name>
    <dbReference type="NCBI Taxonomy" id="354242"/>
    <lineage>
        <taxon>Bacteria</taxon>
        <taxon>Pseudomonadati</taxon>
        <taxon>Campylobacterota</taxon>
        <taxon>Epsilonproteobacteria</taxon>
        <taxon>Campylobacterales</taxon>
        <taxon>Campylobacteraceae</taxon>
        <taxon>Campylobacter</taxon>
    </lineage>
</organism>
<gene>
    <name evidence="1" type="primary">argS</name>
    <name type="ordered locus">CJJ81176_1190</name>
</gene>
<protein>
    <recommendedName>
        <fullName evidence="1">Arginine--tRNA ligase</fullName>
        <ecNumber evidence="1">6.1.1.19</ecNumber>
    </recommendedName>
    <alternativeName>
        <fullName evidence="1">Arginyl-tRNA synthetase</fullName>
        <shortName evidence="1">ArgRS</shortName>
    </alternativeName>
</protein>
<dbReference type="EC" id="6.1.1.19" evidence="1"/>
<dbReference type="EMBL" id="CP000538">
    <property type="protein sequence ID" value="EAQ72230.1"/>
    <property type="molecule type" value="Genomic_DNA"/>
</dbReference>
<dbReference type="RefSeq" id="WP_011812766.1">
    <property type="nucleotide sequence ID" value="NC_008787.1"/>
</dbReference>
<dbReference type="SMR" id="A1W0F9"/>
<dbReference type="KEGG" id="cjj:CJJ81176_1190"/>
<dbReference type="eggNOG" id="COG0018">
    <property type="taxonomic scope" value="Bacteria"/>
</dbReference>
<dbReference type="HOGENOM" id="CLU_006406_0_1_7"/>
<dbReference type="Proteomes" id="UP000000646">
    <property type="component" value="Chromosome"/>
</dbReference>
<dbReference type="GO" id="GO:0005737">
    <property type="term" value="C:cytoplasm"/>
    <property type="evidence" value="ECO:0007669"/>
    <property type="project" value="UniProtKB-SubCell"/>
</dbReference>
<dbReference type="GO" id="GO:0004814">
    <property type="term" value="F:arginine-tRNA ligase activity"/>
    <property type="evidence" value="ECO:0007669"/>
    <property type="project" value="UniProtKB-UniRule"/>
</dbReference>
<dbReference type="GO" id="GO:0005524">
    <property type="term" value="F:ATP binding"/>
    <property type="evidence" value="ECO:0007669"/>
    <property type="project" value="UniProtKB-UniRule"/>
</dbReference>
<dbReference type="GO" id="GO:0006420">
    <property type="term" value="P:arginyl-tRNA aminoacylation"/>
    <property type="evidence" value="ECO:0007669"/>
    <property type="project" value="UniProtKB-UniRule"/>
</dbReference>
<dbReference type="CDD" id="cd00671">
    <property type="entry name" value="ArgRS_core"/>
    <property type="match status" value="1"/>
</dbReference>
<dbReference type="FunFam" id="3.40.50.620:FF:000062">
    <property type="entry name" value="Arginine--tRNA ligase"/>
    <property type="match status" value="1"/>
</dbReference>
<dbReference type="Gene3D" id="3.30.1360.70">
    <property type="entry name" value="Arginyl tRNA synthetase N-terminal domain"/>
    <property type="match status" value="1"/>
</dbReference>
<dbReference type="Gene3D" id="3.40.50.620">
    <property type="entry name" value="HUPs"/>
    <property type="match status" value="1"/>
</dbReference>
<dbReference type="Gene3D" id="1.10.730.10">
    <property type="entry name" value="Isoleucyl-tRNA Synthetase, Domain 1"/>
    <property type="match status" value="1"/>
</dbReference>
<dbReference type="HAMAP" id="MF_00123">
    <property type="entry name" value="Arg_tRNA_synth"/>
    <property type="match status" value="1"/>
</dbReference>
<dbReference type="InterPro" id="IPR001412">
    <property type="entry name" value="aa-tRNA-synth_I_CS"/>
</dbReference>
<dbReference type="InterPro" id="IPR001278">
    <property type="entry name" value="Arg-tRNA-ligase"/>
</dbReference>
<dbReference type="InterPro" id="IPR005148">
    <property type="entry name" value="Arg-tRNA-synth_N"/>
</dbReference>
<dbReference type="InterPro" id="IPR036695">
    <property type="entry name" value="Arg-tRNA-synth_N_sf"/>
</dbReference>
<dbReference type="InterPro" id="IPR035684">
    <property type="entry name" value="ArgRS_core"/>
</dbReference>
<dbReference type="InterPro" id="IPR008909">
    <property type="entry name" value="DALR_anticod-bd"/>
</dbReference>
<dbReference type="InterPro" id="IPR014729">
    <property type="entry name" value="Rossmann-like_a/b/a_fold"/>
</dbReference>
<dbReference type="InterPro" id="IPR009080">
    <property type="entry name" value="tRNAsynth_Ia_anticodon-bd"/>
</dbReference>
<dbReference type="NCBIfam" id="TIGR00456">
    <property type="entry name" value="argS"/>
    <property type="match status" value="1"/>
</dbReference>
<dbReference type="PANTHER" id="PTHR11956:SF5">
    <property type="entry name" value="ARGININE--TRNA LIGASE, CYTOPLASMIC"/>
    <property type="match status" value="1"/>
</dbReference>
<dbReference type="PANTHER" id="PTHR11956">
    <property type="entry name" value="ARGINYL-TRNA SYNTHETASE"/>
    <property type="match status" value="1"/>
</dbReference>
<dbReference type="Pfam" id="PF03485">
    <property type="entry name" value="Arg_tRNA_synt_N"/>
    <property type="match status" value="1"/>
</dbReference>
<dbReference type="Pfam" id="PF05746">
    <property type="entry name" value="DALR_1"/>
    <property type="match status" value="1"/>
</dbReference>
<dbReference type="Pfam" id="PF00750">
    <property type="entry name" value="tRNA-synt_1d"/>
    <property type="match status" value="1"/>
</dbReference>
<dbReference type="PRINTS" id="PR01038">
    <property type="entry name" value="TRNASYNTHARG"/>
</dbReference>
<dbReference type="SMART" id="SM01016">
    <property type="entry name" value="Arg_tRNA_synt_N"/>
    <property type="match status" value="1"/>
</dbReference>
<dbReference type="SMART" id="SM00836">
    <property type="entry name" value="DALR_1"/>
    <property type="match status" value="1"/>
</dbReference>
<dbReference type="SUPFAM" id="SSF47323">
    <property type="entry name" value="Anticodon-binding domain of a subclass of class I aminoacyl-tRNA synthetases"/>
    <property type="match status" value="1"/>
</dbReference>
<dbReference type="SUPFAM" id="SSF55190">
    <property type="entry name" value="Arginyl-tRNA synthetase (ArgRS), N-terminal 'additional' domain"/>
    <property type="match status" value="1"/>
</dbReference>
<dbReference type="SUPFAM" id="SSF52374">
    <property type="entry name" value="Nucleotidylyl transferase"/>
    <property type="match status" value="1"/>
</dbReference>
<dbReference type="PROSITE" id="PS00178">
    <property type="entry name" value="AA_TRNA_LIGASE_I"/>
    <property type="match status" value="1"/>
</dbReference>
<name>SYR_CAMJJ</name>
<accession>A1W0F9</accession>
<comment type="catalytic activity">
    <reaction evidence="1">
        <text>tRNA(Arg) + L-arginine + ATP = L-arginyl-tRNA(Arg) + AMP + diphosphate</text>
        <dbReference type="Rhea" id="RHEA:20301"/>
        <dbReference type="Rhea" id="RHEA-COMP:9658"/>
        <dbReference type="Rhea" id="RHEA-COMP:9673"/>
        <dbReference type="ChEBI" id="CHEBI:30616"/>
        <dbReference type="ChEBI" id="CHEBI:32682"/>
        <dbReference type="ChEBI" id="CHEBI:33019"/>
        <dbReference type="ChEBI" id="CHEBI:78442"/>
        <dbReference type="ChEBI" id="CHEBI:78513"/>
        <dbReference type="ChEBI" id="CHEBI:456215"/>
        <dbReference type="EC" id="6.1.1.19"/>
    </reaction>
</comment>
<comment type="subunit">
    <text evidence="1">Monomer.</text>
</comment>
<comment type="subcellular location">
    <subcellularLocation>
        <location evidence="1">Cytoplasm</location>
    </subcellularLocation>
</comment>
<comment type="similarity">
    <text evidence="1">Belongs to the class-I aminoacyl-tRNA synthetase family.</text>
</comment>